<accession>Q7WQS8</accession>
<proteinExistence type="inferred from homology"/>
<reference key="1">
    <citation type="journal article" date="2003" name="Nat. Genet.">
        <title>Comparative analysis of the genome sequences of Bordetella pertussis, Bordetella parapertussis and Bordetella bronchiseptica.</title>
        <authorList>
            <person name="Parkhill J."/>
            <person name="Sebaihia M."/>
            <person name="Preston A."/>
            <person name="Murphy L.D."/>
            <person name="Thomson N.R."/>
            <person name="Harris D.E."/>
            <person name="Holden M.T.G."/>
            <person name="Churcher C.M."/>
            <person name="Bentley S.D."/>
            <person name="Mungall K.L."/>
            <person name="Cerdeno-Tarraga A.-M."/>
            <person name="Temple L."/>
            <person name="James K.D."/>
            <person name="Harris B."/>
            <person name="Quail M.A."/>
            <person name="Achtman M."/>
            <person name="Atkin R."/>
            <person name="Baker S."/>
            <person name="Basham D."/>
            <person name="Bason N."/>
            <person name="Cherevach I."/>
            <person name="Chillingworth T."/>
            <person name="Collins M."/>
            <person name="Cronin A."/>
            <person name="Davis P."/>
            <person name="Doggett J."/>
            <person name="Feltwell T."/>
            <person name="Goble A."/>
            <person name="Hamlin N."/>
            <person name="Hauser H."/>
            <person name="Holroyd S."/>
            <person name="Jagels K."/>
            <person name="Leather S."/>
            <person name="Moule S."/>
            <person name="Norberczak H."/>
            <person name="O'Neil S."/>
            <person name="Ormond D."/>
            <person name="Price C."/>
            <person name="Rabbinowitsch E."/>
            <person name="Rutter S."/>
            <person name="Sanders M."/>
            <person name="Saunders D."/>
            <person name="Seeger K."/>
            <person name="Sharp S."/>
            <person name="Simmonds M."/>
            <person name="Skelton J."/>
            <person name="Squares R."/>
            <person name="Squares S."/>
            <person name="Stevens K."/>
            <person name="Unwin L."/>
            <person name="Whitehead S."/>
            <person name="Barrell B.G."/>
            <person name="Maskell D.J."/>
        </authorList>
    </citation>
    <scope>NUCLEOTIDE SEQUENCE [LARGE SCALE GENOMIC DNA]</scope>
    <source>
        <strain>ATCC BAA-588 / NCTC 13252 / RB50</strain>
    </source>
</reference>
<feature type="chain" id="PRO_0000082924" description="Methionyl-tRNA formyltransferase">
    <location>
        <begin position="1"/>
        <end position="312"/>
    </location>
</feature>
<feature type="binding site" evidence="1">
    <location>
        <begin position="117"/>
        <end position="120"/>
    </location>
    <ligand>
        <name>(6S)-5,6,7,8-tetrahydrofolate</name>
        <dbReference type="ChEBI" id="CHEBI:57453"/>
    </ligand>
</feature>
<protein>
    <recommendedName>
        <fullName evidence="1">Methionyl-tRNA formyltransferase</fullName>
        <ecNumber evidence="1">2.1.2.9</ecNumber>
    </recommendedName>
</protein>
<comment type="function">
    <text evidence="1">Attaches a formyl group to the free amino group of methionyl-tRNA(fMet). The formyl group appears to play a dual role in the initiator identity of N-formylmethionyl-tRNA by promoting its recognition by IF2 and preventing the misappropriation of this tRNA by the elongation apparatus.</text>
</comment>
<comment type="catalytic activity">
    <reaction evidence="1">
        <text>L-methionyl-tRNA(fMet) + (6R)-10-formyltetrahydrofolate = N-formyl-L-methionyl-tRNA(fMet) + (6S)-5,6,7,8-tetrahydrofolate + H(+)</text>
        <dbReference type="Rhea" id="RHEA:24380"/>
        <dbReference type="Rhea" id="RHEA-COMP:9952"/>
        <dbReference type="Rhea" id="RHEA-COMP:9953"/>
        <dbReference type="ChEBI" id="CHEBI:15378"/>
        <dbReference type="ChEBI" id="CHEBI:57453"/>
        <dbReference type="ChEBI" id="CHEBI:78530"/>
        <dbReference type="ChEBI" id="CHEBI:78844"/>
        <dbReference type="ChEBI" id="CHEBI:195366"/>
        <dbReference type="EC" id="2.1.2.9"/>
    </reaction>
</comment>
<comment type="similarity">
    <text evidence="1">Belongs to the Fmt family.</text>
</comment>
<organism>
    <name type="scientific">Bordetella bronchiseptica (strain ATCC BAA-588 / NCTC 13252 / RB50)</name>
    <name type="common">Alcaligenes bronchisepticus</name>
    <dbReference type="NCBI Taxonomy" id="257310"/>
    <lineage>
        <taxon>Bacteria</taxon>
        <taxon>Pseudomonadati</taxon>
        <taxon>Pseudomonadota</taxon>
        <taxon>Betaproteobacteria</taxon>
        <taxon>Burkholderiales</taxon>
        <taxon>Alcaligenaceae</taxon>
        <taxon>Bordetella</taxon>
    </lineage>
</organism>
<sequence length="312" mass="32602">MRLVFAGTPEFARIALDALLAAGHDVPLVLTQPDRPAGRGLKLTPSPVKQAALAAGIEVAQPRSLRLDGRYPDEAAAARAQLERVAPDVMVVAAYGLILPQWTLDLPRLGCLNIHASLLPRWRGAAPIQRAIEAGDAETGVTIMQMDAGLDTGDMLLERAVPIGAQQTAAQLHDELALAGGQAIVDALAALGQGGLAPRRQPDAGVTYAAKLDKAEAALDCSLPAAVLARRVRAFNPVPGATIRLPGLDDPVKVWRAQALEQAAGGPPGAVLRADAQGIDIATGQGVLRLLELQKAGGKRQPVDVFVRGWQP</sequence>
<gene>
    <name evidence="1" type="primary">fmt</name>
    <name type="ordered locus">BB0248</name>
</gene>
<dbReference type="EC" id="2.1.2.9" evidence="1"/>
<dbReference type="EMBL" id="BX640437">
    <property type="protein sequence ID" value="CAE30746.1"/>
    <property type="molecule type" value="Genomic_DNA"/>
</dbReference>
<dbReference type="RefSeq" id="WP_003807302.1">
    <property type="nucleotide sequence ID" value="NC_002927.3"/>
</dbReference>
<dbReference type="SMR" id="Q7WQS8"/>
<dbReference type="GeneID" id="56481072"/>
<dbReference type="KEGG" id="bbr:BB0248"/>
<dbReference type="eggNOG" id="COG0223">
    <property type="taxonomic scope" value="Bacteria"/>
</dbReference>
<dbReference type="HOGENOM" id="CLU_033347_1_2_4"/>
<dbReference type="Proteomes" id="UP000001027">
    <property type="component" value="Chromosome"/>
</dbReference>
<dbReference type="GO" id="GO:0005829">
    <property type="term" value="C:cytosol"/>
    <property type="evidence" value="ECO:0007669"/>
    <property type="project" value="TreeGrafter"/>
</dbReference>
<dbReference type="GO" id="GO:0004479">
    <property type="term" value="F:methionyl-tRNA formyltransferase activity"/>
    <property type="evidence" value="ECO:0007669"/>
    <property type="project" value="UniProtKB-UniRule"/>
</dbReference>
<dbReference type="CDD" id="cd08646">
    <property type="entry name" value="FMT_core_Met-tRNA-FMT_N"/>
    <property type="match status" value="1"/>
</dbReference>
<dbReference type="CDD" id="cd08704">
    <property type="entry name" value="Met_tRNA_FMT_C"/>
    <property type="match status" value="1"/>
</dbReference>
<dbReference type="Gene3D" id="3.10.25.10">
    <property type="entry name" value="Formyl transferase, C-terminal domain"/>
    <property type="match status" value="1"/>
</dbReference>
<dbReference type="Gene3D" id="3.40.50.170">
    <property type="entry name" value="Formyl transferase, N-terminal domain"/>
    <property type="match status" value="1"/>
</dbReference>
<dbReference type="HAMAP" id="MF_00182">
    <property type="entry name" value="Formyl_trans"/>
    <property type="match status" value="1"/>
</dbReference>
<dbReference type="InterPro" id="IPR005794">
    <property type="entry name" value="Fmt"/>
</dbReference>
<dbReference type="InterPro" id="IPR005793">
    <property type="entry name" value="Formyl_trans_C"/>
</dbReference>
<dbReference type="InterPro" id="IPR037022">
    <property type="entry name" value="Formyl_trans_C_sf"/>
</dbReference>
<dbReference type="InterPro" id="IPR002376">
    <property type="entry name" value="Formyl_transf_N"/>
</dbReference>
<dbReference type="InterPro" id="IPR036477">
    <property type="entry name" value="Formyl_transf_N_sf"/>
</dbReference>
<dbReference type="InterPro" id="IPR011034">
    <property type="entry name" value="Formyl_transferase-like_C_sf"/>
</dbReference>
<dbReference type="InterPro" id="IPR001555">
    <property type="entry name" value="GART_AS"/>
</dbReference>
<dbReference type="InterPro" id="IPR044135">
    <property type="entry name" value="Met-tRNA-FMT_C"/>
</dbReference>
<dbReference type="InterPro" id="IPR041711">
    <property type="entry name" value="Met-tRNA-FMT_N"/>
</dbReference>
<dbReference type="NCBIfam" id="TIGR00460">
    <property type="entry name" value="fmt"/>
    <property type="match status" value="1"/>
</dbReference>
<dbReference type="PANTHER" id="PTHR11138">
    <property type="entry name" value="METHIONYL-TRNA FORMYLTRANSFERASE"/>
    <property type="match status" value="1"/>
</dbReference>
<dbReference type="PANTHER" id="PTHR11138:SF5">
    <property type="entry name" value="METHIONYL-TRNA FORMYLTRANSFERASE, MITOCHONDRIAL"/>
    <property type="match status" value="1"/>
</dbReference>
<dbReference type="Pfam" id="PF02911">
    <property type="entry name" value="Formyl_trans_C"/>
    <property type="match status" value="1"/>
</dbReference>
<dbReference type="Pfam" id="PF00551">
    <property type="entry name" value="Formyl_trans_N"/>
    <property type="match status" value="1"/>
</dbReference>
<dbReference type="SUPFAM" id="SSF50486">
    <property type="entry name" value="FMT C-terminal domain-like"/>
    <property type="match status" value="1"/>
</dbReference>
<dbReference type="SUPFAM" id="SSF53328">
    <property type="entry name" value="Formyltransferase"/>
    <property type="match status" value="1"/>
</dbReference>
<dbReference type="PROSITE" id="PS00373">
    <property type="entry name" value="GART"/>
    <property type="match status" value="1"/>
</dbReference>
<evidence type="ECO:0000255" key="1">
    <source>
        <dbReference type="HAMAP-Rule" id="MF_00182"/>
    </source>
</evidence>
<keyword id="KW-0648">Protein biosynthesis</keyword>
<keyword id="KW-0808">Transferase</keyword>
<name>FMT_BORBR</name>